<sequence length="284" mass="32456">MKKIQAGTVGIGLRHPHYQTLLDQLPTLGFLEVHSENYFNPHSQNRFYLEQIAAHYPLSFHGIGLSIGSSEDISKTHLQNLKQIIDIFQPVLVSDHISWSSLQSNFFNDLLPIPYTKKALSCFVNNLNQTQEHLQRQILIENPSSYLEYNDSEMSEPEFINEIVKQTGCGLLLDLNNVYVSATNHQFSVEKYLDIIDHTTVQEIHLAGFTQKQVNNSTMLIDTHSTLISQSVWDIYQTYMSTKKTDALTLIEWDLDIPKLGTLIEEHNKAINIKQSLCTSDKHV</sequence>
<comment type="similarity">
    <text evidence="1">Belongs to the UPF0276 family.</text>
</comment>
<protein>
    <recommendedName>
        <fullName evidence="1">UPF0276 protein Ping_0944</fullName>
    </recommendedName>
</protein>
<proteinExistence type="inferred from homology"/>
<feature type="chain" id="PRO_1000045474" description="UPF0276 protein Ping_0944">
    <location>
        <begin position="1"/>
        <end position="284"/>
    </location>
</feature>
<gene>
    <name type="ordered locus">Ping_0944</name>
</gene>
<dbReference type="EMBL" id="CP000510">
    <property type="protein sequence ID" value="ABM02786.1"/>
    <property type="molecule type" value="Genomic_DNA"/>
</dbReference>
<dbReference type="RefSeq" id="WP_011769349.1">
    <property type="nucleotide sequence ID" value="NC_008709.1"/>
</dbReference>
<dbReference type="SMR" id="A1STH1"/>
<dbReference type="STRING" id="357804.Ping_0944"/>
<dbReference type="KEGG" id="pin:Ping_0944"/>
<dbReference type="eggNOG" id="COG3220">
    <property type="taxonomic scope" value="Bacteria"/>
</dbReference>
<dbReference type="HOGENOM" id="CLU_064263_0_0_6"/>
<dbReference type="OrthoDB" id="9763101at2"/>
<dbReference type="Proteomes" id="UP000000639">
    <property type="component" value="Chromosome"/>
</dbReference>
<dbReference type="Gene3D" id="3.20.20.150">
    <property type="entry name" value="Divalent-metal-dependent TIM barrel enzymes"/>
    <property type="match status" value="1"/>
</dbReference>
<dbReference type="HAMAP" id="MF_00697">
    <property type="entry name" value="UPF0276"/>
    <property type="match status" value="1"/>
</dbReference>
<dbReference type="InterPro" id="IPR007801">
    <property type="entry name" value="MbnB/TglH/ChrH"/>
</dbReference>
<dbReference type="InterPro" id="IPR036237">
    <property type="entry name" value="Xyl_isomerase-like_sf"/>
</dbReference>
<dbReference type="NCBIfam" id="NF003818">
    <property type="entry name" value="PRK05409.1"/>
    <property type="match status" value="1"/>
</dbReference>
<dbReference type="PANTHER" id="PTHR42194">
    <property type="entry name" value="UPF0276 PROTEIN HI_1600"/>
    <property type="match status" value="1"/>
</dbReference>
<dbReference type="PANTHER" id="PTHR42194:SF1">
    <property type="entry name" value="UPF0276 PROTEIN HI_1600"/>
    <property type="match status" value="1"/>
</dbReference>
<dbReference type="Pfam" id="PF05114">
    <property type="entry name" value="MbnB_TglH_ChrH"/>
    <property type="match status" value="1"/>
</dbReference>
<dbReference type="SUPFAM" id="SSF51658">
    <property type="entry name" value="Xylose isomerase-like"/>
    <property type="match status" value="1"/>
</dbReference>
<organism>
    <name type="scientific">Psychromonas ingrahamii (strain DSM 17664 / CCUG 51855 / 37)</name>
    <dbReference type="NCBI Taxonomy" id="357804"/>
    <lineage>
        <taxon>Bacteria</taxon>
        <taxon>Pseudomonadati</taxon>
        <taxon>Pseudomonadota</taxon>
        <taxon>Gammaproteobacteria</taxon>
        <taxon>Alteromonadales</taxon>
        <taxon>Psychromonadaceae</taxon>
        <taxon>Psychromonas</taxon>
    </lineage>
</organism>
<keyword id="KW-1185">Reference proteome</keyword>
<reference key="1">
    <citation type="journal article" date="2008" name="BMC Genomics">
        <title>Genomics of an extreme psychrophile, Psychromonas ingrahamii.</title>
        <authorList>
            <person name="Riley M."/>
            <person name="Staley J.T."/>
            <person name="Danchin A."/>
            <person name="Wang T.Z."/>
            <person name="Brettin T.S."/>
            <person name="Hauser L.J."/>
            <person name="Land M.L."/>
            <person name="Thompson L.S."/>
        </authorList>
    </citation>
    <scope>NUCLEOTIDE SEQUENCE [LARGE SCALE GENOMIC DNA]</scope>
    <source>
        <strain>DSM 17664 / CCUG 51855 / 37</strain>
    </source>
</reference>
<accession>A1STH1</accession>
<evidence type="ECO:0000255" key="1">
    <source>
        <dbReference type="HAMAP-Rule" id="MF_00697"/>
    </source>
</evidence>
<name>Y944_PSYIN</name>